<accession>Q4ZMN8</accession>
<keyword id="KW-0240">DNA-directed RNA polymerase</keyword>
<keyword id="KW-0460">Magnesium</keyword>
<keyword id="KW-0479">Metal-binding</keyword>
<keyword id="KW-0548">Nucleotidyltransferase</keyword>
<keyword id="KW-0804">Transcription</keyword>
<keyword id="KW-0808">Transferase</keyword>
<keyword id="KW-0862">Zinc</keyword>
<proteinExistence type="inferred from homology"/>
<feature type="chain" id="PRO_0000225568" description="DNA-directed RNA polymerase subunit beta'">
    <location>
        <begin position="1"/>
        <end position="1399"/>
    </location>
</feature>
<feature type="binding site" evidence="1">
    <location>
        <position position="70"/>
    </location>
    <ligand>
        <name>Zn(2+)</name>
        <dbReference type="ChEBI" id="CHEBI:29105"/>
        <label>1</label>
    </ligand>
</feature>
<feature type="binding site" evidence="1">
    <location>
        <position position="72"/>
    </location>
    <ligand>
        <name>Zn(2+)</name>
        <dbReference type="ChEBI" id="CHEBI:29105"/>
        <label>1</label>
    </ligand>
</feature>
<feature type="binding site" evidence="1">
    <location>
        <position position="85"/>
    </location>
    <ligand>
        <name>Zn(2+)</name>
        <dbReference type="ChEBI" id="CHEBI:29105"/>
        <label>1</label>
    </ligand>
</feature>
<feature type="binding site" evidence="1">
    <location>
        <position position="88"/>
    </location>
    <ligand>
        <name>Zn(2+)</name>
        <dbReference type="ChEBI" id="CHEBI:29105"/>
        <label>1</label>
    </ligand>
</feature>
<feature type="binding site" evidence="1">
    <location>
        <position position="460"/>
    </location>
    <ligand>
        <name>Mg(2+)</name>
        <dbReference type="ChEBI" id="CHEBI:18420"/>
    </ligand>
</feature>
<feature type="binding site" evidence="1">
    <location>
        <position position="462"/>
    </location>
    <ligand>
        <name>Mg(2+)</name>
        <dbReference type="ChEBI" id="CHEBI:18420"/>
    </ligand>
</feature>
<feature type="binding site" evidence="1">
    <location>
        <position position="464"/>
    </location>
    <ligand>
        <name>Mg(2+)</name>
        <dbReference type="ChEBI" id="CHEBI:18420"/>
    </ligand>
</feature>
<feature type="binding site" evidence="1">
    <location>
        <position position="814"/>
    </location>
    <ligand>
        <name>Zn(2+)</name>
        <dbReference type="ChEBI" id="CHEBI:29105"/>
        <label>2</label>
    </ligand>
</feature>
<feature type="binding site" evidence="1">
    <location>
        <position position="888"/>
    </location>
    <ligand>
        <name>Zn(2+)</name>
        <dbReference type="ChEBI" id="CHEBI:29105"/>
        <label>2</label>
    </ligand>
</feature>
<feature type="binding site" evidence="1">
    <location>
        <position position="895"/>
    </location>
    <ligand>
        <name>Zn(2+)</name>
        <dbReference type="ChEBI" id="CHEBI:29105"/>
        <label>2</label>
    </ligand>
</feature>
<feature type="binding site" evidence="1">
    <location>
        <position position="898"/>
    </location>
    <ligand>
        <name>Zn(2+)</name>
        <dbReference type="ChEBI" id="CHEBI:29105"/>
        <label>2</label>
    </ligand>
</feature>
<organism>
    <name type="scientific">Pseudomonas syringae pv. syringae (strain B728a)</name>
    <dbReference type="NCBI Taxonomy" id="205918"/>
    <lineage>
        <taxon>Bacteria</taxon>
        <taxon>Pseudomonadati</taxon>
        <taxon>Pseudomonadota</taxon>
        <taxon>Gammaproteobacteria</taxon>
        <taxon>Pseudomonadales</taxon>
        <taxon>Pseudomonadaceae</taxon>
        <taxon>Pseudomonas</taxon>
        <taxon>Pseudomonas syringae</taxon>
    </lineage>
</organism>
<sequence>MKDLLNLLKNQGQVEEFDAIRIGLASPEMIRSWSFGEVKKPETINYRTFKPERDGLFCAKIFGPVKDYECLCGKYKRLKHRGVICEKCGVEVALAKVRRERMAHIELASPVAHIWFLKSLPSRIGLLMDMTLRDIERVLYFESYVVIDPGMTTLEKGQLLNDEQYFEALEEFGDDFDARMGAEAVRELLHAIDLEHEIGRLREEIPQTNSETKIKKLSKRLKLMEAFQGSGNLPEWMVLTVLPVLPPDLRPLVPLDGGRFATSDLNDLYRRVINRNNRLKRLLDLSAPDIIVRNEKRMLQEAVDALLDNGRRGRAITGSNKRPLKSLADMIKGKQGRFRQNLLGKRVDYSGRSVITVGPTLRLHQCGLPKKMALELFKPFIFGKLEMRGLATTIKAAKKMVERELPEVWDVLAEVIREHPVLLNRAPTLHRLGIQAFEPVLIEGKAIQLHPLVCAAYNADFDGDQMAVHVPLTLEAQLEARALMMSTNNILSPANGEPIIVPSQDVVLGLYYMTREAINAKGEGRVFADLQEVDRVFRAGEAALHAKVKVRIHETVNDRDGGSVKNTRIVDTTVGRALLFQVVPAGLSYDVVNQPMKKKAISKLINQCYRVVGLKETVIFADQLMYTGFAYSTISGVSIGVNDFVIPDEKARIIDAATEEVKEIESQYASGLVTQGEKYNKVIDLWSKANDEVSKAMMSNLSKERVIDRHGVEVDQESFNSMYMMADSGARGSAAQIRQLAGMRGLMAKPDGSIIETPITANFREGLSVLQYFISTHGARKGLADTALKTANSGYLTRRLVDVAQDLVVTEVDCGTEHGLLMTPHIEGGDVVEPLGERVLGRVIARDVFKPGTEDVIVPAGTLVDEKWVEFIELNSIDEVIVRSPISCETRYGICAKCYGRDLARGHQVNIGEAVGVIAAQSIGEPGTQLTMRTFHIGGAASRTSAADSVQVKNGGTVRLHNLKHVERVDGHLVAVSRSGELAIADDFGRERERYKLPYGAVISVKEGDKVDAGSIVAKWDPHTHPIVTEMKGTVTYVGMEEGITIKRQTDELTGMTNIEVLDAKDRPAAGKDIRPAVKMVGLDGKDLLLPGTDVPAQYFLPANALVGVADGAQIAIGDVIARIPQETSKTRDITGGLPRVADLFEARRPKEASILAEVSGTIAFGKETKGKRRLVITPNDGSDPYEELIPKWRHLNVFEGEQVNRGEVISDGPSDPHDILRLLGVSALAKYIVNEIQDVYRLQGVKINDKHIETILRQMLRKVEIAESGDSSFIKGDQMELTHVLVENERLSTEDKFVSKFTRVLLGITKASLSTESFISAASFQETTRVLTEAAVTGKRDYLRGLKENVVVGRLIPAGTGLAYHSERKRRREMDKPTRVSASEVEAALTEALNSSGN</sequence>
<comment type="function">
    <text evidence="1">DNA-dependent RNA polymerase catalyzes the transcription of DNA into RNA using the four ribonucleoside triphosphates as substrates.</text>
</comment>
<comment type="catalytic activity">
    <reaction evidence="1">
        <text>RNA(n) + a ribonucleoside 5'-triphosphate = RNA(n+1) + diphosphate</text>
        <dbReference type="Rhea" id="RHEA:21248"/>
        <dbReference type="Rhea" id="RHEA-COMP:14527"/>
        <dbReference type="Rhea" id="RHEA-COMP:17342"/>
        <dbReference type="ChEBI" id="CHEBI:33019"/>
        <dbReference type="ChEBI" id="CHEBI:61557"/>
        <dbReference type="ChEBI" id="CHEBI:140395"/>
        <dbReference type="EC" id="2.7.7.6"/>
    </reaction>
</comment>
<comment type="cofactor">
    <cofactor evidence="1">
        <name>Mg(2+)</name>
        <dbReference type="ChEBI" id="CHEBI:18420"/>
    </cofactor>
    <text evidence="1">Binds 1 Mg(2+) ion per subunit.</text>
</comment>
<comment type="cofactor">
    <cofactor evidence="1">
        <name>Zn(2+)</name>
        <dbReference type="ChEBI" id="CHEBI:29105"/>
    </cofactor>
    <text evidence="1">Binds 2 Zn(2+) ions per subunit.</text>
</comment>
<comment type="subunit">
    <text evidence="1">The RNAP catalytic core consists of 2 alpha, 1 beta, 1 beta' and 1 omega subunit. When a sigma factor is associated with the core the holoenzyme is formed, which can initiate transcription.</text>
</comment>
<comment type="similarity">
    <text evidence="1">Belongs to the RNA polymerase beta' chain family.</text>
</comment>
<gene>
    <name evidence="1" type="primary">rpoC</name>
    <name type="ordered locus">Psyr_4554</name>
</gene>
<evidence type="ECO:0000255" key="1">
    <source>
        <dbReference type="HAMAP-Rule" id="MF_01322"/>
    </source>
</evidence>
<name>RPOC_PSEU2</name>
<dbReference type="EC" id="2.7.7.6" evidence="1"/>
<dbReference type="EMBL" id="CP000075">
    <property type="protein sequence ID" value="AAY39584.1"/>
    <property type="molecule type" value="Genomic_DNA"/>
</dbReference>
<dbReference type="RefSeq" id="WP_003431814.1">
    <property type="nucleotide sequence ID" value="NC_007005.1"/>
</dbReference>
<dbReference type="RefSeq" id="YP_237622.1">
    <property type="nucleotide sequence ID" value="NC_007005.1"/>
</dbReference>
<dbReference type="SMR" id="Q4ZMN8"/>
<dbReference type="STRING" id="205918.Psyr_4554"/>
<dbReference type="GeneID" id="65076904"/>
<dbReference type="KEGG" id="psb:Psyr_4554"/>
<dbReference type="PATRIC" id="fig|205918.7.peg.4693"/>
<dbReference type="eggNOG" id="COG0086">
    <property type="taxonomic scope" value="Bacteria"/>
</dbReference>
<dbReference type="HOGENOM" id="CLU_000524_3_1_6"/>
<dbReference type="OrthoDB" id="9815296at2"/>
<dbReference type="Proteomes" id="UP000000426">
    <property type="component" value="Chromosome"/>
</dbReference>
<dbReference type="GO" id="GO:0000428">
    <property type="term" value="C:DNA-directed RNA polymerase complex"/>
    <property type="evidence" value="ECO:0007669"/>
    <property type="project" value="UniProtKB-KW"/>
</dbReference>
<dbReference type="GO" id="GO:0003677">
    <property type="term" value="F:DNA binding"/>
    <property type="evidence" value="ECO:0007669"/>
    <property type="project" value="UniProtKB-UniRule"/>
</dbReference>
<dbReference type="GO" id="GO:0003899">
    <property type="term" value="F:DNA-directed RNA polymerase activity"/>
    <property type="evidence" value="ECO:0007669"/>
    <property type="project" value="UniProtKB-UniRule"/>
</dbReference>
<dbReference type="GO" id="GO:0000287">
    <property type="term" value="F:magnesium ion binding"/>
    <property type="evidence" value="ECO:0007669"/>
    <property type="project" value="UniProtKB-UniRule"/>
</dbReference>
<dbReference type="GO" id="GO:0008270">
    <property type="term" value="F:zinc ion binding"/>
    <property type="evidence" value="ECO:0007669"/>
    <property type="project" value="UniProtKB-UniRule"/>
</dbReference>
<dbReference type="GO" id="GO:0006351">
    <property type="term" value="P:DNA-templated transcription"/>
    <property type="evidence" value="ECO:0007669"/>
    <property type="project" value="UniProtKB-UniRule"/>
</dbReference>
<dbReference type="CDD" id="cd02655">
    <property type="entry name" value="RNAP_beta'_C"/>
    <property type="match status" value="1"/>
</dbReference>
<dbReference type="CDD" id="cd01609">
    <property type="entry name" value="RNAP_beta'_N"/>
    <property type="match status" value="1"/>
</dbReference>
<dbReference type="FunFam" id="1.10.132.30:FF:000003">
    <property type="entry name" value="DNA-directed RNA polymerase subunit beta"/>
    <property type="match status" value="1"/>
</dbReference>
<dbReference type="FunFam" id="1.10.150.390:FF:000002">
    <property type="entry name" value="DNA-directed RNA polymerase subunit beta"/>
    <property type="match status" value="1"/>
</dbReference>
<dbReference type="FunFam" id="1.10.40.90:FF:000001">
    <property type="entry name" value="DNA-directed RNA polymerase subunit beta"/>
    <property type="match status" value="1"/>
</dbReference>
<dbReference type="FunFam" id="4.10.860.120:FF:000001">
    <property type="entry name" value="DNA-directed RNA polymerase subunit beta"/>
    <property type="match status" value="1"/>
</dbReference>
<dbReference type="Gene3D" id="1.10.132.30">
    <property type="match status" value="1"/>
</dbReference>
<dbReference type="Gene3D" id="1.10.150.390">
    <property type="match status" value="1"/>
</dbReference>
<dbReference type="Gene3D" id="1.10.1790.20">
    <property type="match status" value="1"/>
</dbReference>
<dbReference type="Gene3D" id="1.10.40.90">
    <property type="match status" value="1"/>
</dbReference>
<dbReference type="Gene3D" id="2.40.40.20">
    <property type="match status" value="1"/>
</dbReference>
<dbReference type="Gene3D" id="2.40.50.100">
    <property type="match status" value="3"/>
</dbReference>
<dbReference type="Gene3D" id="4.10.860.120">
    <property type="entry name" value="RNA polymerase II, clamp domain"/>
    <property type="match status" value="1"/>
</dbReference>
<dbReference type="Gene3D" id="1.10.274.100">
    <property type="entry name" value="RNA polymerase Rpb1, domain 3"/>
    <property type="match status" value="2"/>
</dbReference>
<dbReference type="HAMAP" id="MF_01322">
    <property type="entry name" value="RNApol_bact_RpoC"/>
    <property type="match status" value="1"/>
</dbReference>
<dbReference type="InterPro" id="IPR045867">
    <property type="entry name" value="DNA-dir_RpoC_beta_prime"/>
</dbReference>
<dbReference type="InterPro" id="IPR012754">
    <property type="entry name" value="DNA-dir_RpoC_beta_prime_bact"/>
</dbReference>
<dbReference type="InterPro" id="IPR000722">
    <property type="entry name" value="RNA_pol_asu"/>
</dbReference>
<dbReference type="InterPro" id="IPR006592">
    <property type="entry name" value="RNA_pol_N"/>
</dbReference>
<dbReference type="InterPro" id="IPR007080">
    <property type="entry name" value="RNA_pol_Rpb1_1"/>
</dbReference>
<dbReference type="InterPro" id="IPR007066">
    <property type="entry name" value="RNA_pol_Rpb1_3"/>
</dbReference>
<dbReference type="InterPro" id="IPR042102">
    <property type="entry name" value="RNA_pol_Rpb1_3_sf"/>
</dbReference>
<dbReference type="InterPro" id="IPR007083">
    <property type="entry name" value="RNA_pol_Rpb1_4"/>
</dbReference>
<dbReference type="InterPro" id="IPR007081">
    <property type="entry name" value="RNA_pol_Rpb1_5"/>
</dbReference>
<dbReference type="InterPro" id="IPR044893">
    <property type="entry name" value="RNA_pol_Rpb1_clamp_domain"/>
</dbReference>
<dbReference type="InterPro" id="IPR038120">
    <property type="entry name" value="Rpb1_funnel_sf"/>
</dbReference>
<dbReference type="NCBIfam" id="TIGR02386">
    <property type="entry name" value="rpoC_TIGR"/>
    <property type="match status" value="1"/>
</dbReference>
<dbReference type="PANTHER" id="PTHR19376">
    <property type="entry name" value="DNA-DIRECTED RNA POLYMERASE"/>
    <property type="match status" value="1"/>
</dbReference>
<dbReference type="PANTHER" id="PTHR19376:SF54">
    <property type="entry name" value="DNA-DIRECTED RNA POLYMERASE SUBUNIT BETA"/>
    <property type="match status" value="1"/>
</dbReference>
<dbReference type="Pfam" id="PF04997">
    <property type="entry name" value="RNA_pol_Rpb1_1"/>
    <property type="match status" value="1"/>
</dbReference>
<dbReference type="Pfam" id="PF00623">
    <property type="entry name" value="RNA_pol_Rpb1_2"/>
    <property type="match status" value="2"/>
</dbReference>
<dbReference type="Pfam" id="PF04983">
    <property type="entry name" value="RNA_pol_Rpb1_3"/>
    <property type="match status" value="1"/>
</dbReference>
<dbReference type="Pfam" id="PF05000">
    <property type="entry name" value="RNA_pol_Rpb1_4"/>
    <property type="match status" value="1"/>
</dbReference>
<dbReference type="Pfam" id="PF04998">
    <property type="entry name" value="RNA_pol_Rpb1_5"/>
    <property type="match status" value="1"/>
</dbReference>
<dbReference type="SMART" id="SM00663">
    <property type="entry name" value="RPOLA_N"/>
    <property type="match status" value="1"/>
</dbReference>
<dbReference type="SUPFAM" id="SSF64484">
    <property type="entry name" value="beta and beta-prime subunits of DNA dependent RNA-polymerase"/>
    <property type="match status" value="1"/>
</dbReference>
<reference key="1">
    <citation type="journal article" date="2005" name="Proc. Natl. Acad. Sci. U.S.A.">
        <title>Comparison of the complete genome sequences of Pseudomonas syringae pv. syringae B728a and pv. tomato DC3000.</title>
        <authorList>
            <person name="Feil H."/>
            <person name="Feil W.S."/>
            <person name="Chain P."/>
            <person name="Larimer F."/>
            <person name="Dibartolo G."/>
            <person name="Copeland A."/>
            <person name="Lykidis A."/>
            <person name="Trong S."/>
            <person name="Nolan M."/>
            <person name="Goltsman E."/>
            <person name="Thiel J."/>
            <person name="Malfatti S."/>
            <person name="Loper J.E."/>
            <person name="Lapidus A."/>
            <person name="Detter J.C."/>
            <person name="Land M."/>
            <person name="Richardson P.M."/>
            <person name="Kyrpides N.C."/>
            <person name="Ivanova N."/>
            <person name="Lindow S.E."/>
        </authorList>
    </citation>
    <scope>NUCLEOTIDE SEQUENCE [LARGE SCALE GENOMIC DNA]</scope>
    <source>
        <strain>B728a</strain>
    </source>
</reference>
<protein>
    <recommendedName>
        <fullName evidence="1">DNA-directed RNA polymerase subunit beta'</fullName>
        <shortName evidence="1">RNAP subunit beta'</shortName>
        <ecNumber evidence="1">2.7.7.6</ecNumber>
    </recommendedName>
    <alternativeName>
        <fullName evidence="1">RNA polymerase subunit beta'</fullName>
    </alternativeName>
    <alternativeName>
        <fullName evidence="1">Transcriptase subunit beta'</fullName>
    </alternativeName>
</protein>